<protein>
    <recommendedName>
        <fullName>Protein sevenless</fullName>
        <ecNumber>2.7.10.1</ecNumber>
    </recommendedName>
</protein>
<name>7LESS_DROME</name>
<dbReference type="EC" id="2.7.10.1"/>
<dbReference type="EMBL" id="J03158">
    <property type="protein sequence ID" value="AAA28882.1"/>
    <property type="molecule type" value="Genomic_DNA"/>
</dbReference>
<dbReference type="EMBL" id="X13666">
    <property type="protein sequence ID" value="CAA31960.1"/>
    <property type="status" value="ALT_INIT"/>
    <property type="molecule type" value="mRNA"/>
</dbReference>
<dbReference type="EMBL" id="X13666">
    <property type="protein sequence ID" value="CAB55310.1"/>
    <property type="molecule type" value="mRNA"/>
</dbReference>
<dbReference type="EMBL" id="AE014298">
    <property type="protein sequence ID" value="AAF47992.2"/>
    <property type="molecule type" value="Genomic_DNA"/>
</dbReference>
<dbReference type="EMBL" id="AJ002917">
    <property type="protein sequence ID" value="CAA05752.1"/>
    <property type="molecule type" value="Genomic_DNA"/>
</dbReference>
<dbReference type="PIR" id="A28912">
    <property type="entry name" value="TVFF7L"/>
</dbReference>
<dbReference type="RefSeq" id="NP_511114.2">
    <property type="nucleotide sequence ID" value="NM_078559.3"/>
</dbReference>
<dbReference type="PDB" id="9BFP">
    <property type="method" value="EM"/>
    <property type="resolution" value="2.78 A"/>
    <property type="chains" value="A=123-2119"/>
</dbReference>
<dbReference type="PDB" id="9BFQ">
    <property type="method" value="EM"/>
    <property type="resolution" value="3.09 A"/>
    <property type="chains" value="A=123-2119"/>
</dbReference>
<dbReference type="PDB" id="9BFS">
    <property type="method" value="EM"/>
    <property type="resolution" value="3.06 A"/>
    <property type="chains" value="A/B=123-2119"/>
</dbReference>
<dbReference type="PDB" id="9BFU">
    <property type="method" value="EM"/>
    <property type="resolution" value="4.07 A"/>
    <property type="chains" value="A/B=123-2119"/>
</dbReference>
<dbReference type="PDB" id="9BHX">
    <property type="method" value="EM"/>
    <property type="resolution" value="3.94 A"/>
    <property type="chains" value="A=215-1798"/>
</dbReference>
<dbReference type="PDBsum" id="9BFP"/>
<dbReference type="PDBsum" id="9BFQ"/>
<dbReference type="PDBsum" id="9BFS"/>
<dbReference type="PDBsum" id="9BFU"/>
<dbReference type="PDBsum" id="9BHX"/>
<dbReference type="EMDB" id="EMD-44502"/>
<dbReference type="EMDB" id="EMD-44503"/>
<dbReference type="EMDB" id="EMD-44505"/>
<dbReference type="EMDB" id="EMD-44507"/>
<dbReference type="EMDB" id="EMD-44556"/>
<dbReference type="SMR" id="P13368"/>
<dbReference type="BioGRID" id="58454">
    <property type="interactions" value="45"/>
</dbReference>
<dbReference type="FunCoup" id="P13368">
    <property type="interactions" value="98"/>
</dbReference>
<dbReference type="IntAct" id="P13368">
    <property type="interactions" value="6"/>
</dbReference>
<dbReference type="STRING" id="7227.FBpp0073249"/>
<dbReference type="GlyCosmos" id="P13368">
    <property type="glycosylation" value="19 sites, No reported glycans"/>
</dbReference>
<dbReference type="GlyGen" id="P13368">
    <property type="glycosylation" value="23 sites"/>
</dbReference>
<dbReference type="PaxDb" id="7227-FBpp0073249"/>
<dbReference type="EnsemblMetazoa" id="FBtr0073393">
    <property type="protein sequence ID" value="FBpp0073249"/>
    <property type="gene ID" value="FBgn0003366"/>
</dbReference>
<dbReference type="GeneID" id="32039"/>
<dbReference type="KEGG" id="dme:Dmel_CG18085"/>
<dbReference type="UCSC" id="CG18085-RA">
    <property type="organism name" value="d. melanogaster"/>
</dbReference>
<dbReference type="AGR" id="FB:FBgn0003366"/>
<dbReference type="CTD" id="32039"/>
<dbReference type="FlyBase" id="FBgn0003366">
    <property type="gene designation" value="sev"/>
</dbReference>
<dbReference type="VEuPathDB" id="VectorBase:FBgn0003366"/>
<dbReference type="eggNOG" id="KOG1095">
    <property type="taxonomic scope" value="Eukaryota"/>
</dbReference>
<dbReference type="HOGENOM" id="CLU_000762_0_0_1"/>
<dbReference type="InParanoid" id="P13368"/>
<dbReference type="OrthoDB" id="65481at2759"/>
<dbReference type="PhylomeDB" id="P13368"/>
<dbReference type="BRENDA" id="2.7.10.1">
    <property type="organism ID" value="1994"/>
</dbReference>
<dbReference type="SignaLink" id="P13368"/>
<dbReference type="BioGRID-ORCS" id="32039">
    <property type="hits" value="0 hits in 3 CRISPR screens"/>
</dbReference>
<dbReference type="ChiTaRS" id="sev">
    <property type="organism name" value="fly"/>
</dbReference>
<dbReference type="GenomeRNAi" id="32039"/>
<dbReference type="PRO" id="PR:P13368"/>
<dbReference type="Proteomes" id="UP000000803">
    <property type="component" value="Chromosome X"/>
</dbReference>
<dbReference type="Bgee" id="FBgn0003366">
    <property type="expression patterns" value="Expressed in adult oenocyte (Drosophila) in body wall and 54 other cell types or tissues"/>
</dbReference>
<dbReference type="ExpressionAtlas" id="P13368">
    <property type="expression patterns" value="baseline and differential"/>
</dbReference>
<dbReference type="GO" id="GO:0005886">
    <property type="term" value="C:plasma membrane"/>
    <property type="evidence" value="ECO:0000314"/>
    <property type="project" value="FlyBase"/>
</dbReference>
<dbReference type="GO" id="GO:0043235">
    <property type="term" value="C:receptor complex"/>
    <property type="evidence" value="ECO:0000318"/>
    <property type="project" value="GO_Central"/>
</dbReference>
<dbReference type="GO" id="GO:0005524">
    <property type="term" value="F:ATP binding"/>
    <property type="evidence" value="ECO:0007669"/>
    <property type="project" value="UniProtKB-KW"/>
</dbReference>
<dbReference type="GO" id="GO:0008288">
    <property type="term" value="F:boss receptor activity"/>
    <property type="evidence" value="ECO:0000314"/>
    <property type="project" value="FlyBase"/>
</dbReference>
<dbReference type="GO" id="GO:0019199">
    <property type="term" value="F:transmembrane receptor protein kinase activity"/>
    <property type="evidence" value="ECO:0000314"/>
    <property type="project" value="FlyBase"/>
</dbReference>
<dbReference type="GO" id="GO:0004714">
    <property type="term" value="F:transmembrane receptor protein tyrosine kinase activity"/>
    <property type="evidence" value="ECO:0000318"/>
    <property type="project" value="GO_Central"/>
</dbReference>
<dbReference type="GO" id="GO:0007169">
    <property type="term" value="P:cell surface receptor protein tyrosine kinase signaling pathway"/>
    <property type="evidence" value="ECO:0000318"/>
    <property type="project" value="GO_Central"/>
</dbReference>
<dbReference type="GO" id="GO:0060250">
    <property type="term" value="P:germ-line stem-cell niche homeostasis"/>
    <property type="evidence" value="ECO:0000315"/>
    <property type="project" value="FlyBase"/>
</dbReference>
<dbReference type="GO" id="GO:0007465">
    <property type="term" value="P:R7 cell fate commitment"/>
    <property type="evidence" value="ECO:0000315"/>
    <property type="project" value="FlyBase"/>
</dbReference>
<dbReference type="GO" id="GO:0032006">
    <property type="term" value="P:regulation of TOR signaling"/>
    <property type="evidence" value="ECO:0000318"/>
    <property type="project" value="GO_Central"/>
</dbReference>
<dbReference type="GO" id="GO:0045500">
    <property type="term" value="P:sevenless signaling pathway"/>
    <property type="evidence" value="ECO:0000314"/>
    <property type="project" value="FlyBase"/>
</dbReference>
<dbReference type="GO" id="GO:0007601">
    <property type="term" value="P:visual perception"/>
    <property type="evidence" value="ECO:0007669"/>
    <property type="project" value="UniProtKB-KW"/>
</dbReference>
<dbReference type="CDD" id="cd00063">
    <property type="entry name" value="FN3"/>
    <property type="match status" value="5"/>
</dbReference>
<dbReference type="CDD" id="cd05044">
    <property type="entry name" value="PTKc_c-ros"/>
    <property type="match status" value="1"/>
</dbReference>
<dbReference type="FunFam" id="2.60.40.10:FF:002939">
    <property type="entry name" value="Protein sevenless"/>
    <property type="match status" value="1"/>
</dbReference>
<dbReference type="FunFam" id="1.10.510.10:FF:000341">
    <property type="entry name" value="Tyrosine-protein kinase receptor"/>
    <property type="match status" value="1"/>
</dbReference>
<dbReference type="Gene3D" id="2.60.40.10">
    <property type="entry name" value="Immunoglobulins"/>
    <property type="match status" value="5"/>
</dbReference>
<dbReference type="Gene3D" id="3.30.200.20">
    <property type="entry name" value="Phosphorylase Kinase, domain 1"/>
    <property type="match status" value="1"/>
</dbReference>
<dbReference type="Gene3D" id="2.120.10.30">
    <property type="entry name" value="TolB, C-terminal domain"/>
    <property type="match status" value="1"/>
</dbReference>
<dbReference type="Gene3D" id="1.10.510.10">
    <property type="entry name" value="Transferase(Phosphotransferase) domain 1"/>
    <property type="match status" value="1"/>
</dbReference>
<dbReference type="InterPro" id="IPR011042">
    <property type="entry name" value="6-blade_b-propeller_TolB-like"/>
</dbReference>
<dbReference type="InterPro" id="IPR003961">
    <property type="entry name" value="FN3_dom"/>
</dbReference>
<dbReference type="InterPro" id="IPR036116">
    <property type="entry name" value="FN3_sf"/>
</dbReference>
<dbReference type="InterPro" id="IPR013783">
    <property type="entry name" value="Ig-like_fold"/>
</dbReference>
<dbReference type="InterPro" id="IPR011009">
    <property type="entry name" value="Kinase-like_dom_sf"/>
</dbReference>
<dbReference type="InterPro" id="IPR000033">
    <property type="entry name" value="LDLR_classB_rpt"/>
</dbReference>
<dbReference type="InterPro" id="IPR000719">
    <property type="entry name" value="Prot_kinase_dom"/>
</dbReference>
<dbReference type="InterPro" id="IPR017441">
    <property type="entry name" value="Protein_kinase_ATP_BS"/>
</dbReference>
<dbReference type="InterPro" id="IPR050122">
    <property type="entry name" value="RTK"/>
</dbReference>
<dbReference type="InterPro" id="IPR001245">
    <property type="entry name" value="Ser-Thr/Tyr_kinase_cat_dom"/>
</dbReference>
<dbReference type="InterPro" id="IPR008266">
    <property type="entry name" value="Tyr_kinase_AS"/>
</dbReference>
<dbReference type="InterPro" id="IPR020635">
    <property type="entry name" value="Tyr_kinase_cat_dom"/>
</dbReference>
<dbReference type="InterPro" id="IPR002011">
    <property type="entry name" value="Tyr_kinase_rcpt_2_CS"/>
</dbReference>
<dbReference type="PANTHER" id="PTHR24416:SF527">
    <property type="entry name" value="PROTO-ONCOGENE TYROSINE-PROTEIN KINASE ROS"/>
    <property type="match status" value="1"/>
</dbReference>
<dbReference type="PANTHER" id="PTHR24416">
    <property type="entry name" value="TYROSINE-PROTEIN KINASE RECEPTOR"/>
    <property type="match status" value="1"/>
</dbReference>
<dbReference type="Pfam" id="PF00041">
    <property type="entry name" value="fn3"/>
    <property type="match status" value="2"/>
</dbReference>
<dbReference type="Pfam" id="PF07714">
    <property type="entry name" value="PK_Tyr_Ser-Thr"/>
    <property type="match status" value="1"/>
</dbReference>
<dbReference type="PRINTS" id="PR00109">
    <property type="entry name" value="TYRKINASE"/>
</dbReference>
<dbReference type="SMART" id="SM00060">
    <property type="entry name" value="FN3"/>
    <property type="match status" value="7"/>
</dbReference>
<dbReference type="SMART" id="SM00135">
    <property type="entry name" value="LY"/>
    <property type="match status" value="2"/>
</dbReference>
<dbReference type="SMART" id="SM00219">
    <property type="entry name" value="TyrKc"/>
    <property type="match status" value="1"/>
</dbReference>
<dbReference type="SUPFAM" id="SSF49265">
    <property type="entry name" value="Fibronectin type III"/>
    <property type="match status" value="5"/>
</dbReference>
<dbReference type="SUPFAM" id="SSF56112">
    <property type="entry name" value="Protein kinase-like (PK-like)"/>
    <property type="match status" value="1"/>
</dbReference>
<dbReference type="SUPFAM" id="SSF63825">
    <property type="entry name" value="YWTD domain"/>
    <property type="match status" value="2"/>
</dbReference>
<dbReference type="PROSITE" id="PS50853">
    <property type="entry name" value="FN3"/>
    <property type="match status" value="7"/>
</dbReference>
<dbReference type="PROSITE" id="PS00107">
    <property type="entry name" value="PROTEIN_KINASE_ATP"/>
    <property type="match status" value="1"/>
</dbReference>
<dbReference type="PROSITE" id="PS50011">
    <property type="entry name" value="PROTEIN_KINASE_DOM"/>
    <property type="match status" value="1"/>
</dbReference>
<dbReference type="PROSITE" id="PS00109">
    <property type="entry name" value="PROTEIN_KINASE_TYR"/>
    <property type="match status" value="1"/>
</dbReference>
<dbReference type="PROSITE" id="PS00239">
    <property type="entry name" value="RECEPTOR_TYR_KIN_II"/>
    <property type="match status" value="1"/>
</dbReference>
<reference key="1">
    <citation type="journal article" date="1988" name="Cell">
        <title>Control of photoreceptor cell fate by the sevenless protein requires a functional tyrosine kinase domain.</title>
        <authorList>
            <person name="Basler K."/>
            <person name="Hafen E."/>
        </authorList>
    </citation>
    <scope>NUCLEOTIDE SEQUENCE [GENOMIC DNA]</scope>
    <scope>FUNCTION</scope>
    <scope>MUTAGENESIS OF LYS-2242</scope>
    <source>
        <strain>Canton-S</strain>
    </source>
</reference>
<reference key="2">
    <citation type="journal article" date="1988" name="Genes Dev.">
        <title>Nucleotide sequence and structure of the sevenless gene of Drosophila melanogaster.</title>
        <authorList>
            <person name="Bowtell D.L.L."/>
            <person name="Simon M.A."/>
            <person name="Rubin G.M."/>
        </authorList>
    </citation>
    <scope>NUCLEOTIDE SEQUENCE [MRNA]</scope>
    <source>
        <strain>Oregon-R</strain>
    </source>
</reference>
<reference key="3">
    <citation type="journal article" date="2000" name="Science">
        <title>The genome sequence of Drosophila melanogaster.</title>
        <authorList>
            <person name="Adams M.D."/>
            <person name="Celniker S.E."/>
            <person name="Holt R.A."/>
            <person name="Evans C.A."/>
            <person name="Gocayne J.D."/>
            <person name="Amanatides P.G."/>
            <person name="Scherer S.E."/>
            <person name="Li P.W."/>
            <person name="Hoskins R.A."/>
            <person name="Galle R.F."/>
            <person name="George R.A."/>
            <person name="Lewis S.E."/>
            <person name="Richards S."/>
            <person name="Ashburner M."/>
            <person name="Henderson S.N."/>
            <person name="Sutton G.G."/>
            <person name="Wortman J.R."/>
            <person name="Yandell M.D."/>
            <person name="Zhang Q."/>
            <person name="Chen L.X."/>
            <person name="Brandon R.C."/>
            <person name="Rogers Y.-H.C."/>
            <person name="Blazej R.G."/>
            <person name="Champe M."/>
            <person name="Pfeiffer B.D."/>
            <person name="Wan K.H."/>
            <person name="Doyle C."/>
            <person name="Baxter E.G."/>
            <person name="Helt G."/>
            <person name="Nelson C.R."/>
            <person name="Miklos G.L.G."/>
            <person name="Abril J.F."/>
            <person name="Agbayani A."/>
            <person name="An H.-J."/>
            <person name="Andrews-Pfannkoch C."/>
            <person name="Baldwin D."/>
            <person name="Ballew R.M."/>
            <person name="Basu A."/>
            <person name="Baxendale J."/>
            <person name="Bayraktaroglu L."/>
            <person name="Beasley E.M."/>
            <person name="Beeson K.Y."/>
            <person name="Benos P.V."/>
            <person name="Berman B.P."/>
            <person name="Bhandari D."/>
            <person name="Bolshakov S."/>
            <person name="Borkova D."/>
            <person name="Botchan M.R."/>
            <person name="Bouck J."/>
            <person name="Brokstein P."/>
            <person name="Brottier P."/>
            <person name="Burtis K.C."/>
            <person name="Busam D.A."/>
            <person name="Butler H."/>
            <person name="Cadieu E."/>
            <person name="Center A."/>
            <person name="Chandra I."/>
            <person name="Cherry J.M."/>
            <person name="Cawley S."/>
            <person name="Dahlke C."/>
            <person name="Davenport L.B."/>
            <person name="Davies P."/>
            <person name="de Pablos B."/>
            <person name="Delcher A."/>
            <person name="Deng Z."/>
            <person name="Mays A.D."/>
            <person name="Dew I."/>
            <person name="Dietz S.M."/>
            <person name="Dodson K."/>
            <person name="Doup L.E."/>
            <person name="Downes M."/>
            <person name="Dugan-Rocha S."/>
            <person name="Dunkov B.C."/>
            <person name="Dunn P."/>
            <person name="Durbin K.J."/>
            <person name="Evangelista C.C."/>
            <person name="Ferraz C."/>
            <person name="Ferriera S."/>
            <person name="Fleischmann W."/>
            <person name="Fosler C."/>
            <person name="Gabrielian A.E."/>
            <person name="Garg N.S."/>
            <person name="Gelbart W.M."/>
            <person name="Glasser K."/>
            <person name="Glodek A."/>
            <person name="Gong F."/>
            <person name="Gorrell J.H."/>
            <person name="Gu Z."/>
            <person name="Guan P."/>
            <person name="Harris M."/>
            <person name="Harris N.L."/>
            <person name="Harvey D.A."/>
            <person name="Heiman T.J."/>
            <person name="Hernandez J.R."/>
            <person name="Houck J."/>
            <person name="Hostin D."/>
            <person name="Houston K.A."/>
            <person name="Howland T.J."/>
            <person name="Wei M.-H."/>
            <person name="Ibegwam C."/>
            <person name="Jalali M."/>
            <person name="Kalush F."/>
            <person name="Karpen G.H."/>
            <person name="Ke Z."/>
            <person name="Kennison J.A."/>
            <person name="Ketchum K.A."/>
            <person name="Kimmel B.E."/>
            <person name="Kodira C.D."/>
            <person name="Kraft C.L."/>
            <person name="Kravitz S."/>
            <person name="Kulp D."/>
            <person name="Lai Z."/>
            <person name="Lasko P."/>
            <person name="Lei Y."/>
            <person name="Levitsky A.A."/>
            <person name="Li J.H."/>
            <person name="Li Z."/>
            <person name="Liang Y."/>
            <person name="Lin X."/>
            <person name="Liu X."/>
            <person name="Mattei B."/>
            <person name="McIntosh T.C."/>
            <person name="McLeod M.P."/>
            <person name="McPherson D."/>
            <person name="Merkulov G."/>
            <person name="Milshina N.V."/>
            <person name="Mobarry C."/>
            <person name="Morris J."/>
            <person name="Moshrefi A."/>
            <person name="Mount S.M."/>
            <person name="Moy M."/>
            <person name="Murphy B."/>
            <person name="Murphy L."/>
            <person name="Muzny D.M."/>
            <person name="Nelson D.L."/>
            <person name="Nelson D.R."/>
            <person name="Nelson K.A."/>
            <person name="Nixon K."/>
            <person name="Nusskern D.R."/>
            <person name="Pacleb J.M."/>
            <person name="Palazzolo M."/>
            <person name="Pittman G.S."/>
            <person name="Pan S."/>
            <person name="Pollard J."/>
            <person name="Puri V."/>
            <person name="Reese M.G."/>
            <person name="Reinert K."/>
            <person name="Remington K."/>
            <person name="Saunders R.D.C."/>
            <person name="Scheeler F."/>
            <person name="Shen H."/>
            <person name="Shue B.C."/>
            <person name="Siden-Kiamos I."/>
            <person name="Simpson M."/>
            <person name="Skupski M.P."/>
            <person name="Smith T.J."/>
            <person name="Spier E."/>
            <person name="Spradling A.C."/>
            <person name="Stapleton M."/>
            <person name="Strong R."/>
            <person name="Sun E."/>
            <person name="Svirskas R."/>
            <person name="Tector C."/>
            <person name="Turner R."/>
            <person name="Venter E."/>
            <person name="Wang A.H."/>
            <person name="Wang X."/>
            <person name="Wang Z.-Y."/>
            <person name="Wassarman D.A."/>
            <person name="Weinstock G.M."/>
            <person name="Weissenbach J."/>
            <person name="Williams S.M."/>
            <person name="Woodage T."/>
            <person name="Worley K.C."/>
            <person name="Wu D."/>
            <person name="Yang S."/>
            <person name="Yao Q.A."/>
            <person name="Ye J."/>
            <person name="Yeh R.-F."/>
            <person name="Zaveri J.S."/>
            <person name="Zhan M."/>
            <person name="Zhang G."/>
            <person name="Zhao Q."/>
            <person name="Zheng L."/>
            <person name="Zheng X.H."/>
            <person name="Zhong F.N."/>
            <person name="Zhong W."/>
            <person name="Zhou X."/>
            <person name="Zhu S.C."/>
            <person name="Zhu X."/>
            <person name="Smith H.O."/>
            <person name="Gibbs R.A."/>
            <person name="Myers E.W."/>
            <person name="Rubin G.M."/>
            <person name="Venter J.C."/>
        </authorList>
    </citation>
    <scope>NUCLEOTIDE SEQUENCE [LARGE SCALE GENOMIC DNA]</scope>
    <source>
        <strain>Berkeley</strain>
    </source>
</reference>
<reference key="4">
    <citation type="journal article" date="2002" name="Genome Biol.">
        <title>Annotation of the Drosophila melanogaster euchromatic genome: a systematic review.</title>
        <authorList>
            <person name="Misra S."/>
            <person name="Crosby M.A."/>
            <person name="Mungall C.J."/>
            <person name="Matthews B.B."/>
            <person name="Campbell K.S."/>
            <person name="Hradecky P."/>
            <person name="Huang Y."/>
            <person name="Kaminker J.S."/>
            <person name="Millburn G.H."/>
            <person name="Prochnik S.E."/>
            <person name="Smith C.D."/>
            <person name="Tupy J.L."/>
            <person name="Whitfield E.J."/>
            <person name="Bayraktaroglu L."/>
            <person name="Berman B.P."/>
            <person name="Bettencourt B.R."/>
            <person name="Celniker S.E."/>
            <person name="de Grey A.D.N.J."/>
            <person name="Drysdale R.A."/>
            <person name="Harris N.L."/>
            <person name="Richter J."/>
            <person name="Russo S."/>
            <person name="Schroeder A.J."/>
            <person name="Shu S.Q."/>
            <person name="Stapleton M."/>
            <person name="Yamada C."/>
            <person name="Ashburner M."/>
            <person name="Gelbart W.M."/>
            <person name="Rubin G.M."/>
            <person name="Lewis S.E."/>
        </authorList>
    </citation>
    <scope>GENOME REANNOTATION</scope>
    <source>
        <strain>Berkeley</strain>
    </source>
</reference>
<reference key="5">
    <citation type="journal article" date="1998" name="Biochem. Biophys. Res. Commun.">
        <title>Sampling the genomic pool of protein tyrosine kinase genes using the polymerase chain reaction with genomic DNA.</title>
        <authorList>
            <person name="Oates A.C."/>
            <person name="Wollberg P."/>
            <person name="Achen M.G."/>
            <person name="Wilks A.F."/>
        </authorList>
    </citation>
    <scope>NUCLEOTIDE SEQUENCE [GENOMIC DNA] OF 2349-2408</scope>
</reference>
<reference key="6">
    <citation type="journal article" date="1990" name="Cell">
        <title>Sevenless: seven found?</title>
        <authorList>
            <person name="Norton P.A."/>
            <person name="Hynes R.O."/>
            <person name="Ress D.J.G."/>
        </authorList>
    </citation>
    <scope>IDENTIFICATION OF FN-III REPEATS</scope>
</reference>
<reference key="7">
    <citation type="journal article" date="1998" name="Mol. Cell. Biol.">
        <title>Disabled is a putative adaptor protein that functions during signaling by the sevenless receptor tyrosine kinase.</title>
        <authorList>
            <person name="Le N."/>
            <person name="Simon M.A."/>
        </authorList>
    </citation>
    <scope>INTERACTION WITH DAB</scope>
</reference>
<comment type="function">
    <text evidence="8">Receptor for an extracellular signal required to instruct a cell to differentiate into an R7 photoreceptor. The ligand for sev is the boss (bride of sevenless) protein on the surface of the neighboring R8 cell.</text>
</comment>
<comment type="catalytic activity">
    <reaction evidence="5">
        <text>L-tyrosyl-[protein] + ATP = O-phospho-L-tyrosyl-[protein] + ADP + H(+)</text>
        <dbReference type="Rhea" id="RHEA:10596"/>
        <dbReference type="Rhea" id="RHEA-COMP:10136"/>
        <dbReference type="Rhea" id="RHEA-COMP:20101"/>
        <dbReference type="ChEBI" id="CHEBI:15378"/>
        <dbReference type="ChEBI" id="CHEBI:30616"/>
        <dbReference type="ChEBI" id="CHEBI:46858"/>
        <dbReference type="ChEBI" id="CHEBI:61978"/>
        <dbReference type="ChEBI" id="CHEBI:456216"/>
        <dbReference type="EC" id="2.7.10.1"/>
    </reaction>
</comment>
<comment type="subunit">
    <text>May form a complex with drk and Sos. Binds the phosphotyrosine interaction domain (PID) of Dab.</text>
</comment>
<comment type="subcellular location">
    <subcellularLocation>
        <location evidence="9">Cell membrane</location>
        <topology evidence="9">Single-pass membrane protein</topology>
    </subcellularLocation>
</comment>
<comment type="domain">
    <text>It is unclear whether the potential membrane spanning region near the N-terminus is present as a transmembrane domain in the native protein or serves as a cleaved signal sequence.</text>
</comment>
<comment type="similarity">
    <text evidence="3">Belongs to the protein kinase superfamily. Tyr protein kinase family. Insulin receptor subfamily.</text>
</comment>
<comment type="sequence caution" evidence="9">
    <conflict type="erroneous initiation">
        <sequence resource="EMBL-CDS" id="CAA31960"/>
    </conflict>
</comment>
<proteinExistence type="evidence at protein level"/>
<keyword id="KW-0002">3D-structure</keyword>
<keyword id="KW-0067">ATP-binding</keyword>
<keyword id="KW-1003">Cell membrane</keyword>
<keyword id="KW-0325">Glycoprotein</keyword>
<keyword id="KW-0418">Kinase</keyword>
<keyword id="KW-0472">Membrane</keyword>
<keyword id="KW-0547">Nucleotide-binding</keyword>
<keyword id="KW-0597">Phosphoprotein</keyword>
<keyword id="KW-0675">Receptor</keyword>
<keyword id="KW-1185">Reference proteome</keyword>
<keyword id="KW-0677">Repeat</keyword>
<keyword id="KW-0716">Sensory transduction</keyword>
<keyword id="KW-0808">Transferase</keyword>
<keyword id="KW-0812">Transmembrane</keyword>
<keyword id="KW-1133">Transmembrane helix</keyword>
<keyword id="KW-0829">Tyrosine-protein kinase</keyword>
<keyword id="KW-0844">Vision</keyword>
<sequence length="2554" mass="287025">MTMFWQQNVDHQSDEQDKQAKGAAPTKRLNISFNVKIAVNVNTKMTTTHINQQAPGTSSSSSNSQNASPSKIVVRQQSSSFDLRQQLARLGRQLASGQDGHGGISTILIINLLLLILLSICCDVCRSHNYTVHQSPEPVSKDQMRLLRPKLDSDVVEKVAIWHKHAAAAPPSIVEGIAISSRPQSTMAHHPDDRDRDRDPSEEQHGVDERMVLERVTRDCVQRCIVEEDLFLDEFGIQCEKADNGEKCYKTRCTKGCAQWYRALKELESCQEACLSLQFYPYDMPCIGACEMAQRDYWHLQRLAISHLVERTQPQLERAPRADGQSTPLTIRWAMHFPEHYLASRPFNIQYQFVDHHGEELDLEQEDQDASGETGSSAWFNLADYDCDEYYVCEILEALIPYTQYRFRFELPFGENRDEVLYSPATPAYQTPPEGAPISAPVIEHLMGLDDSHLAVHWHPGRFTNGPIEGYRLRLSSSEGNATSEQLVPAGRGSYIFSQLQAGTNYTLALSMINKQGEGPVAKGFVQTHSARNEKPAKDLTESVLLVGRRAVMWQSLEPAGENSMIYQSQEELADIAWSKREQQLWLLNVHGELRSLKFESGQMVSPAQQLKLDLGNISSGRWVPRRLSFDWLHHRLYFAMESPERNQSSFQIISTDLLGESAQKVGESFDLPVEQLEVDALNGWIFWRNEESLWRQDLHGRMIHRLLRIRQPGWFLVQPQHFIIHLMLPQEGKFLEISYDGGFKHPLPLPPPSNGAGNGPASSHWQSFALLGRSLLLPDSGQLILVEQQGQAASPSASWPLKNLPDCWAVILLVPESQPLTSAGGKPHSLKALLGAQAAKISWKEPERNPYQSADAARSWSYELEVLDVASQSAFSIRNIRGPIFGLQRLQPDNLYQLRVRAINVDGEPGEWTEPLAARTWPLGPHRLRWASRQGSVIHTNELGEGLEVQQEQLERLPGPMTMVNESVGYYVTGDGLLHCINLVHSQWGCPISEPLQHVGSVTYDWRGGRVYWTDLARNCVVRMDPWSGSRELLPVFEANFLALDPRQGHLYYATSSQLSRHGSTPDEAVTYYRVNGLEGSIASFVLDTQQDQLFWLVKGSGALRLYRAPLTAGGDSLQMIQQIKGVFQAVPDSLQLLRPLGALLWLERSGRRARLVRLAAPLDVMELPTPDQASPASALQLLDPQPLPPRDEGVIPMTVLPDSVRLDDGHWDDFHVRWQPSTSGGNHSVSYRLLLEFGQRLQTLDLSTPFARLTQLPQAQLQLKISITPRTAWRSGDTTRVQLTTPPVAPSQPRRLRVFVERLATALQEANVSAVLRWDAPEQGQEAPMQALEYHISCWVGSELHEELRLNQSALEARVEHLQPDQTYHFQVEARVAATGAAAGAASHALHVAPEVQAVPRVLYANAEFIGELDLDTRNRRRLVHTASPVEHLVGIEGEQRLLWVNEHVELLTHVPGSAPAKLARMRAEVLALAVDWIQRIVYWAELDATAPQAAIIYRLDLCNFEGKILQGERVWSTPRGRLLKDLVALPQAQSLIWLEYEQGSPRNGSLRGRNLTDGSELEWATVQPLIRLHAGSLEPGSETLNLVDNQGKLCVYDVARQLCTASALRAQLNLLGEDSIAGQLAQDSGYLYAVKNWSIRAYGRRRQQLEYTVELEPEEVRLLQAHNYQAYPPKNCLLLPSSGGSLLKATDCEEQRCLLNLPMITASEDCPLPIPGVRYQLNLTLARGPGSEEHDHGVEPLGQWLLGAGESLNLTDLLPFTRYRVSGILSSFYQKKLALPTLVLAPLELLTASATPSPPRNFSVRVLSPRELEVSWLPPEQLRSESVYYTLHWQQELDGENVQDRREWEAHERRLETAGTHRLTGIKPGSGYSLWVQAHATPTKSNSSERLHVRSFAELPELQLLELGPYSLSLTWAGTPDPLGSLQLECRSSAEQLRRNVAGNHTKMVVEPLQPRTRYQCRLLLGYAATPGAPLYHGTAEVYETLGDAPSQPGKPQLEHIAEEVFRVTWTAARGNGAPIALYNLEALQARSDIRRRRRRRRRNSGGSLEQLPWAEEPVVVEDQWLDFCNTTELSCIVKSLHSSRLLLFRVRARSLEHGWGPYSEESERVAEPFVSPEKRGSLVLAIIAPAAIVSSCVLALVLVRKVQKRRLRAKKLLQQSRPSIWSNLSTLQTQQQLMAVRNRAFSTTLSDADIALLPQINWSQLKLLRFLGSGAFGEVYEGQLKTEDSEEPQRVAIKSLRKGASEFAELLQEAQLMSNFKHENIVCLVGICFDTESISLIMEHMEAGDLLSYLRAARATSTQEPQPTAGLSLSELLAMCIDVANGCSYLEDMHFVHRDLACRNCLVTESTGSTDRRRTVKIGDFGLARDIYKSDYYRKEGEGLLPVRWMSPESLVDGLFTTQSDVWAFGVLCWEILTLGQQPYAARNNFEVLAHVKEGGRLQQPPMCTEKLYSLLLLCWRTDPWERPSFRRCYNTLHAISTDLRRTQMASATADTVVSCSRPEFKVRFDGQPLEEHREHNERPEDENLTLREVPLKDKQLYANEGVSRL</sequence>
<organism>
    <name type="scientific">Drosophila melanogaster</name>
    <name type="common">Fruit fly</name>
    <dbReference type="NCBI Taxonomy" id="7227"/>
    <lineage>
        <taxon>Eukaryota</taxon>
        <taxon>Metazoa</taxon>
        <taxon>Ecdysozoa</taxon>
        <taxon>Arthropoda</taxon>
        <taxon>Hexapoda</taxon>
        <taxon>Insecta</taxon>
        <taxon>Pterygota</taxon>
        <taxon>Neoptera</taxon>
        <taxon>Endopterygota</taxon>
        <taxon>Diptera</taxon>
        <taxon>Brachycera</taxon>
        <taxon>Muscomorpha</taxon>
        <taxon>Ephydroidea</taxon>
        <taxon>Drosophilidae</taxon>
        <taxon>Drosophila</taxon>
        <taxon>Sophophora</taxon>
    </lineage>
</organism>
<feature type="chain" id="PRO_0000058928" description="Protein sevenless">
    <location>
        <begin position="1"/>
        <end position="2554"/>
    </location>
</feature>
<feature type="topological domain" description="Extracellular" evidence="2">
    <location>
        <begin position="1"/>
        <end position="2123"/>
    </location>
</feature>
<feature type="transmembrane region" description="Helical" evidence="2">
    <location>
        <begin position="2124"/>
        <end position="2147"/>
    </location>
</feature>
<feature type="topological domain" description="Cytoplasmic" evidence="2">
    <location>
        <begin position="2148"/>
        <end position="2554"/>
    </location>
</feature>
<feature type="domain" description="Fibronectin type-III 1" evidence="4">
    <location>
        <begin position="440"/>
        <end position="533"/>
    </location>
</feature>
<feature type="domain" description="Fibronectin type-III 2" evidence="4">
    <location>
        <begin position="824"/>
        <end position="924"/>
    </location>
</feature>
<feature type="repeat" description="LDL-receptor class B" evidence="7">
    <location>
        <begin position="1010"/>
        <end position="1053"/>
    </location>
</feature>
<feature type="domain" description="Fibronectin type-III 3" evidence="4">
    <location>
        <begin position="1202"/>
        <end position="1290"/>
    </location>
</feature>
<feature type="domain" description="Fibronectin type-III 4" evidence="4">
    <location>
        <begin position="1294"/>
        <end position="1397"/>
    </location>
</feature>
<feature type="domain" description="Fibronectin type-III 5" evidence="4">
    <location>
        <begin position="1801"/>
        <end position="1901"/>
    </location>
</feature>
<feature type="domain" description="Fibronectin type-III 6" evidence="4">
    <location>
        <begin position="1902"/>
        <end position="1988"/>
    </location>
</feature>
<feature type="domain" description="Fibronectin type-III 7" evidence="4">
    <location>
        <begin position="1995"/>
        <end position="2117"/>
    </location>
</feature>
<feature type="domain" description="Protein kinase" evidence="3">
    <location>
        <begin position="2209"/>
        <end position="2485"/>
    </location>
</feature>
<feature type="region of interest" description="Disordered" evidence="6">
    <location>
        <begin position="1"/>
        <end position="25"/>
    </location>
</feature>
<feature type="region of interest" description="Disordered" evidence="6">
    <location>
        <begin position="51"/>
        <end position="75"/>
    </location>
</feature>
<feature type="region of interest" description="Disordered" evidence="6">
    <location>
        <begin position="181"/>
        <end position="208"/>
    </location>
</feature>
<feature type="region of interest" description="Disordered" evidence="6">
    <location>
        <begin position="2515"/>
        <end position="2534"/>
    </location>
</feature>
<feature type="compositionally biased region" description="Polar residues" evidence="6">
    <location>
        <begin position="1"/>
        <end position="10"/>
    </location>
</feature>
<feature type="compositionally biased region" description="Basic and acidic residues" evidence="6">
    <location>
        <begin position="11"/>
        <end position="20"/>
    </location>
</feature>
<feature type="compositionally biased region" description="Low complexity" evidence="6">
    <location>
        <begin position="51"/>
        <end position="70"/>
    </location>
</feature>
<feature type="compositionally biased region" description="Basic and acidic residues" evidence="6">
    <location>
        <begin position="189"/>
        <end position="208"/>
    </location>
</feature>
<feature type="compositionally biased region" description="Basic and acidic residues" evidence="6">
    <location>
        <begin position="2515"/>
        <end position="2527"/>
    </location>
</feature>
<feature type="active site" description="Proton acceptor" evidence="3 5">
    <location>
        <position position="2343"/>
    </location>
</feature>
<feature type="binding site" evidence="3">
    <location>
        <begin position="2215"/>
        <end position="2223"/>
    </location>
    <ligand>
        <name>ATP</name>
        <dbReference type="ChEBI" id="CHEBI:30616"/>
    </ligand>
</feature>
<feature type="binding site" evidence="3">
    <location>
        <position position="2242"/>
    </location>
    <ligand>
        <name>ATP</name>
        <dbReference type="ChEBI" id="CHEBI:30616"/>
    </ligand>
</feature>
<feature type="modified residue" description="Phosphotyrosine; by autocatalysis" evidence="1">
    <location>
        <position position="2380"/>
    </location>
</feature>
<feature type="glycosylation site" description="N-linked (GlcNAc...) asparagine" evidence="2">
    <location>
        <position position="30"/>
    </location>
</feature>
<feature type="glycosylation site" description="N-linked (GlcNAc...) asparagine" evidence="2">
    <location>
        <position position="129"/>
    </location>
</feature>
<feature type="glycosylation site" description="N-linked (GlcNAc...) asparagine" evidence="2">
    <location>
        <position position="481"/>
    </location>
</feature>
<feature type="glycosylation site" description="N-linked (GlcNAc...) asparagine" evidence="2">
    <location>
        <position position="505"/>
    </location>
</feature>
<feature type="glycosylation site" description="N-linked (GlcNAc...) asparagine" evidence="2">
    <location>
        <position position="617"/>
    </location>
</feature>
<feature type="glycosylation site" description="N-linked (GlcNAc...) asparagine" evidence="2">
    <location>
        <position position="647"/>
    </location>
</feature>
<feature type="glycosylation site" description="N-linked (GlcNAc...) asparagine" evidence="2">
    <location>
        <position position="966"/>
    </location>
</feature>
<feature type="glycosylation site" description="N-linked (GlcNAc...) asparagine" evidence="2">
    <location>
        <position position="1228"/>
    </location>
</feature>
<feature type="glycosylation site" description="N-linked (GlcNAc...) asparagine" evidence="2">
    <location>
        <position position="1313"/>
    </location>
</feature>
<feature type="glycosylation site" description="N-linked (GlcNAc...) asparagine" evidence="2">
    <location>
        <position position="1353"/>
    </location>
</feature>
<feature type="glycosylation site" description="N-linked (GlcNAc...) asparagine" evidence="2">
    <location>
        <position position="1550"/>
    </location>
</feature>
<feature type="glycosylation site" description="N-linked (GlcNAc...) asparagine" evidence="2">
    <location>
        <position position="1557"/>
    </location>
</feature>
<feature type="glycosylation site" description="N-linked (GlcNAc...) asparagine" evidence="2">
    <location>
        <position position="1639"/>
    </location>
</feature>
<feature type="glycosylation site" description="N-linked (GlcNAc...) asparagine" evidence="2">
    <location>
        <position position="1725"/>
    </location>
</feature>
<feature type="glycosylation site" description="N-linked (GlcNAc...) asparagine" evidence="2">
    <location>
        <position position="1756"/>
    </location>
</feature>
<feature type="glycosylation site" description="N-linked (GlcNAc...) asparagine" evidence="2">
    <location>
        <position position="1804"/>
    </location>
</feature>
<feature type="glycosylation site" description="N-linked (GlcNAc...) asparagine" evidence="2">
    <location>
        <position position="1889"/>
    </location>
</feature>
<feature type="glycosylation site" description="N-linked (GlcNAc...) asparagine" evidence="2">
    <location>
        <position position="1947"/>
    </location>
</feature>
<feature type="glycosylation site" description="N-linked (GlcNAc...) asparagine" evidence="2">
    <location>
        <position position="2073"/>
    </location>
</feature>
<feature type="mutagenesis site" description="Inactivates the protein." evidence="8">
    <original>K</original>
    <variation>M</variation>
    <location>
        <position position="2242"/>
    </location>
</feature>
<feature type="sequence conflict" description="In Ref. 1; AAA28882." evidence="9" ref="1">
    <original>V</original>
    <variation>M</variation>
    <location>
        <position position="392"/>
    </location>
</feature>
<feature type="sequence conflict" description="In Ref. 3; AAF47992." evidence="9" ref="3">
    <original>A</original>
    <variation>T</variation>
    <location>
        <position position="663"/>
    </location>
</feature>
<feature type="sequence conflict" description="In Ref. 3; AAF47992." evidence="9" ref="3">
    <original>N</original>
    <variation>H</variation>
    <location>
        <position position="1703"/>
    </location>
</feature>
<feature type="sequence conflict" description="In Ref. 3; AAF47992." evidence="9" ref="3">
    <original>RG</original>
    <variation>KE</variation>
    <location>
        <begin position="1730"/>
        <end position="1731"/>
    </location>
</feature>
<feature type="sequence conflict" description="In Ref. 3; AAF47992." evidence="9" ref="3">
    <original>V</original>
    <variation>M</variation>
    <location>
        <position position="1741"/>
    </location>
</feature>
<feature type="sequence conflict" description="In Ref. 2; CAA31960/CAB55310." evidence="9" ref="2">
    <original>E</original>
    <variation>Q</variation>
    <location>
        <position position="1823"/>
    </location>
</feature>
<feature type="sequence conflict" description="In Ref. 1; AAA28882." evidence="9" ref="1">
    <original>C</original>
    <variation>R</variation>
    <location>
        <position position="2271"/>
    </location>
</feature>
<accession>P13368</accession>
<accession>Q9TYI0</accession>
<accession>Q9U5V7</accession>
<accession>Q9VZ36</accession>
<gene>
    <name type="primary">sev</name>
    <name type="synonym">HD-265</name>
    <name type="ORF">CG18085</name>
</gene>
<evidence type="ECO:0000250" key="1"/>
<evidence type="ECO:0000255" key="2"/>
<evidence type="ECO:0000255" key="3">
    <source>
        <dbReference type="PROSITE-ProRule" id="PRU00159"/>
    </source>
</evidence>
<evidence type="ECO:0000255" key="4">
    <source>
        <dbReference type="PROSITE-ProRule" id="PRU00316"/>
    </source>
</evidence>
<evidence type="ECO:0000255" key="5">
    <source>
        <dbReference type="PROSITE-ProRule" id="PRU10028"/>
    </source>
</evidence>
<evidence type="ECO:0000256" key="6">
    <source>
        <dbReference type="SAM" id="MobiDB-lite"/>
    </source>
</evidence>
<evidence type="ECO:0000269" key="7">
    <source>
    </source>
</evidence>
<evidence type="ECO:0000269" key="8">
    <source>
    </source>
</evidence>
<evidence type="ECO:0000305" key="9"/>